<feature type="peptide" id="PRO_0000044180" description="Cardioactive peptide Ocp-3/Ocp-4">
    <location>
        <begin position="1"/>
        <end position="4"/>
    </location>
</feature>
<feature type="modified residue" description="D-serine (Ser)" evidence="1">
    <location>
        <position position="2"/>
    </location>
</feature>
<name>OCP3_CALMC</name>
<proteinExistence type="evidence at protein level"/>
<protein>
    <recommendedName>
        <fullName>Cardioactive peptide Ocp-3/Ocp-4</fullName>
    </recommendedName>
</protein>
<keyword id="KW-0208">D-amino acid</keyword>
<keyword id="KW-0903">Direct protein sequencing</keyword>
<keyword id="KW-0372">Hormone</keyword>
<keyword id="KW-0964">Secreted</keyword>
<sequence>GSWD</sequence>
<comment type="function">
    <text>Cardioactive; has both positive chronotropic and inotropic effects on the heart. Ocp-4 is a 1000 time less active than Ocp-3.</text>
</comment>
<comment type="subcellular location">
    <subcellularLocation>
        <location>Secreted</location>
    </subcellularLocation>
</comment>
<comment type="PTM">
    <text>Ocp-4 has D-Ser instead of L-Ser.</text>
</comment>
<comment type="mass spectrometry"/>
<organism>
    <name type="scientific">Callistoctopus minor</name>
    <name type="common">Octopus</name>
    <name type="synonym">Octopus minor</name>
    <dbReference type="NCBI Taxonomy" id="515824"/>
    <lineage>
        <taxon>Eukaryota</taxon>
        <taxon>Metazoa</taxon>
        <taxon>Spiralia</taxon>
        <taxon>Lophotrochozoa</taxon>
        <taxon>Mollusca</taxon>
        <taxon>Cephalopoda</taxon>
        <taxon>Coleoidea</taxon>
        <taxon>Octopodiformes</taxon>
        <taxon>Octopoda</taxon>
        <taxon>Incirrata</taxon>
        <taxon>Octopodidae</taxon>
        <taxon>Callistoctopus</taxon>
    </lineage>
</organism>
<accession>P58649</accession>
<reference key="1">
    <citation type="journal article" date="2000" name="Peptides">
        <title>Cardioactive peptides isolated from the brain of a Japanese octopus, Octopus minor.</title>
        <authorList>
            <person name="Iwakoshi E."/>
            <person name="Hisada M."/>
            <person name="Minakata H."/>
        </authorList>
    </citation>
    <scope>PROTEIN SEQUENCE</scope>
    <scope>D-AMINO ACID AT SER-2</scope>
    <scope>SYNTHESIS</scope>
    <scope>MASS SPECTROMETRY</scope>
    <scope>CHARACTERIZATION</scope>
    <source>
        <tissue>Brain</tissue>
    </source>
</reference>
<evidence type="ECO:0000269" key="1">
    <source>
    </source>
</evidence>
<dbReference type="GO" id="GO:0005576">
    <property type="term" value="C:extracellular region"/>
    <property type="evidence" value="ECO:0007669"/>
    <property type="project" value="UniProtKB-SubCell"/>
</dbReference>
<dbReference type="GO" id="GO:0005179">
    <property type="term" value="F:hormone activity"/>
    <property type="evidence" value="ECO:0007669"/>
    <property type="project" value="UniProtKB-KW"/>
</dbReference>